<name>MNMG_SALTY</name>
<gene>
    <name evidence="1" type="primary">mnmG</name>
    <name evidence="1" type="synonym">gidA</name>
    <name type="ordered locus">STM3874</name>
</gene>
<sequence length="629" mass="69640">MFYQDPFDVIIIGGGHAGTEAAMAAARMGQQTLLLTHNIDTLGQMSCNPAIGGIGKGHLVKEVDALGGLMAKAIDQAGIQFRILNASKGPAVRATRAQADRVLYRQAVRTALENQPNLMIFQQAVEDLIVENDRVVGAVTQMGLKFRAKAVVLTVGTFLDGKIHIGLDNYSGGRAGDPPSIPLSRRLRELPLRVSRLKTGTPPRIDARTIDFSVLAQQHGDNPMPVFSFMGNASQHPQQVPCYITHTNEKTHDVIRNNLDRSPMYAGVIEGIGPRYCPSIEDKVMRFADRNQHQIFLEPEGLTSNEIYPNGISTSLPFDVQMQIVRSMQGMENAKIVRPGYAIEYDFFDPRDLKPTLESKFIHGLFFAGQINGTTGYEEAAAQGLLAGLNAARLSADKEGWAPARSQAYLGVLVDDLCTLGTKEPYRMFTSRAEYRLMLREDNADLRLTEMGRELGLVDDERWARFNEKLENIERERQRLKSTWVTPSAESADEVNAHLTTPLSREASGEDLLRRPEMTYAQLTSLAAFAPALEDEQAAEQVEIQVKYEGYIARQQDEIEKQLRNENTLLPATLDYRQVSGLSNEVIAKLNDHKPASIGQASRISGVTPAAISILLVWLKKQGMLRRSA</sequence>
<proteinExistence type="inferred from homology"/>
<reference key="1">
    <citation type="journal article" date="2001" name="Nature">
        <title>Complete genome sequence of Salmonella enterica serovar Typhimurium LT2.</title>
        <authorList>
            <person name="McClelland M."/>
            <person name="Sanderson K.E."/>
            <person name="Spieth J."/>
            <person name="Clifton S.W."/>
            <person name="Latreille P."/>
            <person name="Courtney L."/>
            <person name="Porwollik S."/>
            <person name="Ali J."/>
            <person name="Dante M."/>
            <person name="Du F."/>
            <person name="Hou S."/>
            <person name="Layman D."/>
            <person name="Leonard S."/>
            <person name="Nguyen C."/>
            <person name="Scott K."/>
            <person name="Holmes A."/>
            <person name="Grewal N."/>
            <person name="Mulvaney E."/>
            <person name="Ryan E."/>
            <person name="Sun H."/>
            <person name="Florea L."/>
            <person name="Miller W."/>
            <person name="Stoneking T."/>
            <person name="Nhan M."/>
            <person name="Waterston R."/>
            <person name="Wilson R.K."/>
        </authorList>
    </citation>
    <scope>NUCLEOTIDE SEQUENCE [LARGE SCALE GENOMIC DNA]</scope>
    <source>
        <strain>LT2 / SGSC1412 / ATCC 700720</strain>
    </source>
</reference>
<protein>
    <recommendedName>
        <fullName evidence="1">tRNA uridine 5-carboxymethylaminomethyl modification enzyme MnmG</fullName>
    </recommendedName>
    <alternativeName>
        <fullName evidence="1">Glucose-inhibited division protein A</fullName>
    </alternativeName>
</protein>
<feature type="chain" id="PRO_0000117171" description="tRNA uridine 5-carboxymethylaminomethyl modification enzyme MnmG">
    <location>
        <begin position="1"/>
        <end position="629"/>
    </location>
</feature>
<feature type="binding site" evidence="1">
    <location>
        <begin position="13"/>
        <end position="18"/>
    </location>
    <ligand>
        <name>FAD</name>
        <dbReference type="ChEBI" id="CHEBI:57692"/>
    </ligand>
</feature>
<feature type="binding site" evidence="1">
    <location>
        <position position="125"/>
    </location>
    <ligand>
        <name>FAD</name>
        <dbReference type="ChEBI" id="CHEBI:57692"/>
    </ligand>
</feature>
<feature type="binding site" evidence="1">
    <location>
        <position position="180"/>
    </location>
    <ligand>
        <name>FAD</name>
        <dbReference type="ChEBI" id="CHEBI:57692"/>
    </ligand>
</feature>
<feature type="binding site" evidence="1">
    <location>
        <begin position="273"/>
        <end position="287"/>
    </location>
    <ligand>
        <name>NAD(+)</name>
        <dbReference type="ChEBI" id="CHEBI:57540"/>
    </ligand>
</feature>
<feature type="binding site" evidence="1">
    <location>
        <position position="370"/>
    </location>
    <ligand>
        <name>FAD</name>
        <dbReference type="ChEBI" id="CHEBI:57692"/>
    </ligand>
</feature>
<dbReference type="EMBL" id="AE006468">
    <property type="protein sequence ID" value="AAL22732.1"/>
    <property type="molecule type" value="Genomic_DNA"/>
</dbReference>
<dbReference type="RefSeq" id="NP_462773.1">
    <property type="nucleotide sequence ID" value="NC_003197.2"/>
</dbReference>
<dbReference type="RefSeq" id="WP_000499872.1">
    <property type="nucleotide sequence ID" value="NC_003197.2"/>
</dbReference>
<dbReference type="SMR" id="Q8ZKW6"/>
<dbReference type="STRING" id="99287.STM3874"/>
<dbReference type="PaxDb" id="99287-STM3874"/>
<dbReference type="GeneID" id="1255401"/>
<dbReference type="KEGG" id="stm:STM3874"/>
<dbReference type="PATRIC" id="fig|99287.12.peg.4104"/>
<dbReference type="HOGENOM" id="CLU_007831_2_2_6"/>
<dbReference type="OMA" id="CNPAMGG"/>
<dbReference type="PhylomeDB" id="Q8ZKW6"/>
<dbReference type="BioCyc" id="SENT99287:STM3874-MONOMER"/>
<dbReference type="Proteomes" id="UP000001014">
    <property type="component" value="Chromosome"/>
</dbReference>
<dbReference type="GO" id="GO:0005829">
    <property type="term" value="C:cytosol"/>
    <property type="evidence" value="ECO:0000318"/>
    <property type="project" value="GO_Central"/>
</dbReference>
<dbReference type="GO" id="GO:0050660">
    <property type="term" value="F:flavin adenine dinucleotide binding"/>
    <property type="evidence" value="ECO:0000318"/>
    <property type="project" value="GO_Central"/>
</dbReference>
<dbReference type="GO" id="GO:0030488">
    <property type="term" value="P:tRNA methylation"/>
    <property type="evidence" value="ECO:0000318"/>
    <property type="project" value="GO_Central"/>
</dbReference>
<dbReference type="GO" id="GO:0002098">
    <property type="term" value="P:tRNA wobble uridine modification"/>
    <property type="evidence" value="ECO:0000318"/>
    <property type="project" value="GO_Central"/>
</dbReference>
<dbReference type="FunFam" id="1.10.10.1800:FF:000001">
    <property type="entry name" value="tRNA uridine 5-carboxymethylaminomethyl modification enzyme MnmG"/>
    <property type="match status" value="1"/>
</dbReference>
<dbReference type="FunFam" id="1.10.150.570:FF:000001">
    <property type="entry name" value="tRNA uridine 5-carboxymethylaminomethyl modification enzyme MnmG"/>
    <property type="match status" value="1"/>
</dbReference>
<dbReference type="FunFam" id="3.50.50.60:FF:000002">
    <property type="entry name" value="tRNA uridine 5-carboxymethylaminomethyl modification enzyme MnmG"/>
    <property type="match status" value="1"/>
</dbReference>
<dbReference type="FunFam" id="3.50.50.60:FF:000010">
    <property type="entry name" value="tRNA uridine 5-carboxymethylaminomethyl modification enzyme MnmG"/>
    <property type="match status" value="1"/>
</dbReference>
<dbReference type="Gene3D" id="3.50.50.60">
    <property type="entry name" value="FAD/NAD(P)-binding domain"/>
    <property type="match status" value="2"/>
</dbReference>
<dbReference type="Gene3D" id="1.10.150.570">
    <property type="entry name" value="GidA associated domain, C-terminal subdomain"/>
    <property type="match status" value="1"/>
</dbReference>
<dbReference type="Gene3D" id="1.10.10.1800">
    <property type="entry name" value="tRNA uridine 5-carboxymethylaminomethyl modification enzyme MnmG/GidA"/>
    <property type="match status" value="1"/>
</dbReference>
<dbReference type="HAMAP" id="MF_00129">
    <property type="entry name" value="MnmG_GidA"/>
    <property type="match status" value="1"/>
</dbReference>
<dbReference type="InterPro" id="IPR036188">
    <property type="entry name" value="FAD/NAD-bd_sf"/>
</dbReference>
<dbReference type="InterPro" id="IPR049312">
    <property type="entry name" value="GIDA_C_N"/>
</dbReference>
<dbReference type="InterPro" id="IPR004416">
    <property type="entry name" value="MnmG"/>
</dbReference>
<dbReference type="InterPro" id="IPR002218">
    <property type="entry name" value="MnmG-rel"/>
</dbReference>
<dbReference type="InterPro" id="IPR020595">
    <property type="entry name" value="MnmG-rel_CS"/>
</dbReference>
<dbReference type="InterPro" id="IPR026904">
    <property type="entry name" value="MnmG_C"/>
</dbReference>
<dbReference type="InterPro" id="IPR047001">
    <property type="entry name" value="MnmG_C_subdom"/>
</dbReference>
<dbReference type="InterPro" id="IPR044920">
    <property type="entry name" value="MnmG_C_subdom_sf"/>
</dbReference>
<dbReference type="InterPro" id="IPR040131">
    <property type="entry name" value="MnmG_N"/>
</dbReference>
<dbReference type="NCBIfam" id="TIGR00136">
    <property type="entry name" value="mnmG_gidA"/>
    <property type="match status" value="1"/>
</dbReference>
<dbReference type="PANTHER" id="PTHR11806">
    <property type="entry name" value="GLUCOSE INHIBITED DIVISION PROTEIN A"/>
    <property type="match status" value="1"/>
</dbReference>
<dbReference type="PANTHER" id="PTHR11806:SF0">
    <property type="entry name" value="PROTEIN MTO1 HOMOLOG, MITOCHONDRIAL"/>
    <property type="match status" value="1"/>
</dbReference>
<dbReference type="Pfam" id="PF01134">
    <property type="entry name" value="GIDA"/>
    <property type="match status" value="1"/>
</dbReference>
<dbReference type="Pfam" id="PF21680">
    <property type="entry name" value="GIDA_C_1st"/>
    <property type="match status" value="1"/>
</dbReference>
<dbReference type="Pfam" id="PF13932">
    <property type="entry name" value="SAM_GIDA_C"/>
    <property type="match status" value="1"/>
</dbReference>
<dbReference type="SMART" id="SM01228">
    <property type="entry name" value="GIDA_assoc_3"/>
    <property type="match status" value="1"/>
</dbReference>
<dbReference type="SUPFAM" id="SSF51905">
    <property type="entry name" value="FAD/NAD(P)-binding domain"/>
    <property type="match status" value="1"/>
</dbReference>
<dbReference type="PROSITE" id="PS01280">
    <property type="entry name" value="GIDA_1"/>
    <property type="match status" value="1"/>
</dbReference>
<dbReference type="PROSITE" id="PS01281">
    <property type="entry name" value="GIDA_2"/>
    <property type="match status" value="1"/>
</dbReference>
<accession>Q8ZKW6</accession>
<keyword id="KW-0963">Cytoplasm</keyword>
<keyword id="KW-0274">FAD</keyword>
<keyword id="KW-0285">Flavoprotein</keyword>
<keyword id="KW-0520">NAD</keyword>
<keyword id="KW-1185">Reference proteome</keyword>
<keyword id="KW-0819">tRNA processing</keyword>
<comment type="function">
    <text evidence="1">NAD-binding protein involved in the addition of a carboxymethylaminomethyl (cmnm) group at the wobble position (U34) of certain tRNAs, forming tRNA-cmnm(5)s(2)U34.</text>
</comment>
<comment type="cofactor">
    <cofactor evidence="1">
        <name>FAD</name>
        <dbReference type="ChEBI" id="CHEBI:57692"/>
    </cofactor>
</comment>
<comment type="subunit">
    <text evidence="1">Homodimer. Heterotetramer of two MnmE and two MnmG subunits.</text>
</comment>
<comment type="subcellular location">
    <subcellularLocation>
        <location evidence="1">Cytoplasm</location>
    </subcellularLocation>
</comment>
<comment type="similarity">
    <text evidence="1">Belongs to the MnmG family.</text>
</comment>
<evidence type="ECO:0000255" key="1">
    <source>
        <dbReference type="HAMAP-Rule" id="MF_00129"/>
    </source>
</evidence>
<organism>
    <name type="scientific">Salmonella typhimurium (strain LT2 / SGSC1412 / ATCC 700720)</name>
    <dbReference type="NCBI Taxonomy" id="99287"/>
    <lineage>
        <taxon>Bacteria</taxon>
        <taxon>Pseudomonadati</taxon>
        <taxon>Pseudomonadota</taxon>
        <taxon>Gammaproteobacteria</taxon>
        <taxon>Enterobacterales</taxon>
        <taxon>Enterobacteriaceae</taxon>
        <taxon>Salmonella</taxon>
    </lineage>
</organism>